<comment type="function">
    <text evidence="1">Binds 23S rRNA and is also seen to make contacts with the A and possibly P site tRNAs.</text>
</comment>
<comment type="subunit">
    <text evidence="1">Part of the 50S ribosomal subunit.</text>
</comment>
<comment type="similarity">
    <text evidence="1">Belongs to the universal ribosomal protein uL16 family.</text>
</comment>
<feature type="chain" id="PRO_1000142972" description="Large ribosomal subunit protein uL16">
    <location>
        <begin position="1"/>
        <end position="136"/>
    </location>
</feature>
<evidence type="ECO:0000255" key="1">
    <source>
        <dbReference type="HAMAP-Rule" id="MF_01342"/>
    </source>
</evidence>
<evidence type="ECO:0000305" key="2"/>
<protein>
    <recommendedName>
        <fullName evidence="1">Large ribosomal subunit protein uL16</fullName>
    </recommendedName>
    <alternativeName>
        <fullName evidence="2">50S ribosomal protein L16</fullName>
    </alternativeName>
</protein>
<accession>B2VK57</accession>
<gene>
    <name evidence="1" type="primary">rplP</name>
    <name type="ordered locus">ETA_31560</name>
</gene>
<name>RL16_ERWT9</name>
<sequence length="136" mass="15321">MLQPKRTKFRKVHKGRNRGLAQGTDVSFGTFGLKAVGRGRLTARQIEAARRAMTRAVKRQGKIWIRVFPDKPITEKPLEVRMGKGKGNVEYWVALIQPGKVLYEMDGVPEELAREAFKLAAAKLPIKTTFVTKTVM</sequence>
<organism>
    <name type="scientific">Erwinia tasmaniensis (strain DSM 17950 / CFBP 7177 / CIP 109463 / NCPPB 4357 / Et1/99)</name>
    <dbReference type="NCBI Taxonomy" id="465817"/>
    <lineage>
        <taxon>Bacteria</taxon>
        <taxon>Pseudomonadati</taxon>
        <taxon>Pseudomonadota</taxon>
        <taxon>Gammaproteobacteria</taxon>
        <taxon>Enterobacterales</taxon>
        <taxon>Erwiniaceae</taxon>
        <taxon>Erwinia</taxon>
    </lineage>
</organism>
<keyword id="KW-1185">Reference proteome</keyword>
<keyword id="KW-0687">Ribonucleoprotein</keyword>
<keyword id="KW-0689">Ribosomal protein</keyword>
<keyword id="KW-0694">RNA-binding</keyword>
<keyword id="KW-0699">rRNA-binding</keyword>
<keyword id="KW-0820">tRNA-binding</keyword>
<reference key="1">
    <citation type="journal article" date="2008" name="Environ. Microbiol.">
        <title>The genome of Erwinia tasmaniensis strain Et1/99, a non-pathogenic bacterium in the genus Erwinia.</title>
        <authorList>
            <person name="Kube M."/>
            <person name="Migdoll A.M."/>
            <person name="Mueller I."/>
            <person name="Kuhl H."/>
            <person name="Beck A."/>
            <person name="Reinhardt R."/>
            <person name="Geider K."/>
        </authorList>
    </citation>
    <scope>NUCLEOTIDE SEQUENCE [LARGE SCALE GENOMIC DNA]</scope>
    <source>
        <strain>DSM 17950 / CFBP 7177 / CIP 109463 / NCPPB 4357 / Et1/99</strain>
    </source>
</reference>
<dbReference type="EMBL" id="CU468135">
    <property type="protein sequence ID" value="CAO98202.1"/>
    <property type="molecule type" value="Genomic_DNA"/>
</dbReference>
<dbReference type="RefSeq" id="WP_002438716.1">
    <property type="nucleotide sequence ID" value="NC_010694.1"/>
</dbReference>
<dbReference type="SMR" id="B2VK57"/>
<dbReference type="STRING" id="465817.ETA_31560"/>
<dbReference type="GeneID" id="93531702"/>
<dbReference type="KEGG" id="eta:ETA_31560"/>
<dbReference type="eggNOG" id="COG0197">
    <property type="taxonomic scope" value="Bacteria"/>
</dbReference>
<dbReference type="HOGENOM" id="CLU_078858_2_1_6"/>
<dbReference type="OrthoDB" id="9802589at2"/>
<dbReference type="Proteomes" id="UP000001726">
    <property type="component" value="Chromosome"/>
</dbReference>
<dbReference type="GO" id="GO:0022625">
    <property type="term" value="C:cytosolic large ribosomal subunit"/>
    <property type="evidence" value="ECO:0007669"/>
    <property type="project" value="TreeGrafter"/>
</dbReference>
<dbReference type="GO" id="GO:0019843">
    <property type="term" value="F:rRNA binding"/>
    <property type="evidence" value="ECO:0007669"/>
    <property type="project" value="UniProtKB-UniRule"/>
</dbReference>
<dbReference type="GO" id="GO:0003735">
    <property type="term" value="F:structural constituent of ribosome"/>
    <property type="evidence" value="ECO:0007669"/>
    <property type="project" value="InterPro"/>
</dbReference>
<dbReference type="GO" id="GO:0000049">
    <property type="term" value="F:tRNA binding"/>
    <property type="evidence" value="ECO:0007669"/>
    <property type="project" value="UniProtKB-KW"/>
</dbReference>
<dbReference type="GO" id="GO:0006412">
    <property type="term" value="P:translation"/>
    <property type="evidence" value="ECO:0007669"/>
    <property type="project" value="UniProtKB-UniRule"/>
</dbReference>
<dbReference type="CDD" id="cd01433">
    <property type="entry name" value="Ribosomal_L16_L10e"/>
    <property type="match status" value="1"/>
</dbReference>
<dbReference type="FunFam" id="3.90.1170.10:FF:000001">
    <property type="entry name" value="50S ribosomal protein L16"/>
    <property type="match status" value="1"/>
</dbReference>
<dbReference type="Gene3D" id="3.90.1170.10">
    <property type="entry name" value="Ribosomal protein L10e/L16"/>
    <property type="match status" value="1"/>
</dbReference>
<dbReference type="HAMAP" id="MF_01342">
    <property type="entry name" value="Ribosomal_uL16"/>
    <property type="match status" value="1"/>
</dbReference>
<dbReference type="InterPro" id="IPR047873">
    <property type="entry name" value="Ribosomal_uL16"/>
</dbReference>
<dbReference type="InterPro" id="IPR000114">
    <property type="entry name" value="Ribosomal_uL16_bact-type"/>
</dbReference>
<dbReference type="InterPro" id="IPR020798">
    <property type="entry name" value="Ribosomal_uL16_CS"/>
</dbReference>
<dbReference type="InterPro" id="IPR016180">
    <property type="entry name" value="Ribosomal_uL16_dom"/>
</dbReference>
<dbReference type="InterPro" id="IPR036920">
    <property type="entry name" value="Ribosomal_uL16_sf"/>
</dbReference>
<dbReference type="NCBIfam" id="TIGR01164">
    <property type="entry name" value="rplP_bact"/>
    <property type="match status" value="1"/>
</dbReference>
<dbReference type="PANTHER" id="PTHR12220">
    <property type="entry name" value="50S/60S RIBOSOMAL PROTEIN L16"/>
    <property type="match status" value="1"/>
</dbReference>
<dbReference type="PANTHER" id="PTHR12220:SF13">
    <property type="entry name" value="LARGE RIBOSOMAL SUBUNIT PROTEIN UL16M"/>
    <property type="match status" value="1"/>
</dbReference>
<dbReference type="Pfam" id="PF00252">
    <property type="entry name" value="Ribosomal_L16"/>
    <property type="match status" value="1"/>
</dbReference>
<dbReference type="PRINTS" id="PR00060">
    <property type="entry name" value="RIBOSOMALL16"/>
</dbReference>
<dbReference type="SUPFAM" id="SSF54686">
    <property type="entry name" value="Ribosomal protein L16p/L10e"/>
    <property type="match status" value="1"/>
</dbReference>
<dbReference type="PROSITE" id="PS00586">
    <property type="entry name" value="RIBOSOMAL_L16_1"/>
    <property type="match status" value="1"/>
</dbReference>
<dbReference type="PROSITE" id="PS00701">
    <property type="entry name" value="RIBOSOMAL_L16_2"/>
    <property type="match status" value="1"/>
</dbReference>
<proteinExistence type="inferred from homology"/>